<organism>
    <name type="scientific">Streptococcus equi subsp. equi (strain 4047)</name>
    <dbReference type="NCBI Taxonomy" id="553482"/>
    <lineage>
        <taxon>Bacteria</taxon>
        <taxon>Bacillati</taxon>
        <taxon>Bacillota</taxon>
        <taxon>Bacilli</taxon>
        <taxon>Lactobacillales</taxon>
        <taxon>Streptococcaceae</taxon>
        <taxon>Streptococcus</taxon>
    </lineage>
</organism>
<sequence>MKKRIRELTDLLNQYRQEYYTNDAPSVSDSEYDKLYRELVELEQTYPAYILKDSPTQLVGSTILTGFQKYQHQYPLFSLQDAFSREELNAFDQRIKSAFPEAEYLAELKIDGLSISLVYEAGVLKVGATRGDGTIGENITENIKNIKDIPKRLSQALDVTIRGEAYMSRQAFKTINEERQENGEPEFANPRNAAAGTLRQLDTRIVAKRQLATFLYQEVGLETADSQQKTLERLADLGFSVNSHYLLSSSMNDIWDFIQSIEASREELPYEIDGVVVKVNQLAIQEELGFTVKAPRWAIAYKFPAEEKEAEIVSVDWTVGRTGVVTPTANLTPVQLAGTTVSRATLHNVDYIAEKDIRIGDTVVVYKAGDIIPAVLRVVEAKRRDQAPMPIPTACPSCQSQLVHFEDEVALRCINPLCPSLVQRSLEHFASRQAMNIAGLGPAVVEKLYSAGLVHDVADIYRLSLEDLLTLDGIKEKSAEKLLAAIEQSKANSAEKLLFGLGIRHIGAKASRLILEAYGDLEALLAVTAEELAQIDGLGLVIGQSLVQYFQQEQAAQLLAELKSAGVNLAYLGQRPDQQAALFGLTVVLTGKLEKLNRTQAMEKLEQLGAKVTGSVSKKTDLVVAGSEAGSKLAKAQQLGIRIEDEDWLLNL</sequence>
<protein>
    <recommendedName>
        <fullName evidence="1">DNA ligase</fullName>
        <ecNumber evidence="1">6.5.1.2</ecNumber>
    </recommendedName>
    <alternativeName>
        <fullName evidence="1">Polydeoxyribonucleotide synthase [NAD(+)]</fullName>
    </alternativeName>
</protein>
<keyword id="KW-0227">DNA damage</keyword>
<keyword id="KW-0234">DNA repair</keyword>
<keyword id="KW-0235">DNA replication</keyword>
<keyword id="KW-0436">Ligase</keyword>
<keyword id="KW-0460">Magnesium</keyword>
<keyword id="KW-0464">Manganese</keyword>
<keyword id="KW-0479">Metal-binding</keyword>
<keyword id="KW-0520">NAD</keyword>
<keyword id="KW-0862">Zinc</keyword>
<feature type="chain" id="PRO_0000380473" description="DNA ligase">
    <location>
        <begin position="1"/>
        <end position="652"/>
    </location>
</feature>
<feature type="domain" description="BRCT" evidence="1">
    <location>
        <begin position="577"/>
        <end position="652"/>
    </location>
</feature>
<feature type="active site" description="N6-AMP-lysine intermediate" evidence="1">
    <location>
        <position position="109"/>
    </location>
</feature>
<feature type="binding site" evidence="1">
    <location>
        <begin position="29"/>
        <end position="33"/>
    </location>
    <ligand>
        <name>NAD(+)</name>
        <dbReference type="ChEBI" id="CHEBI:57540"/>
    </ligand>
</feature>
<feature type="binding site" evidence="1">
    <location>
        <begin position="78"/>
        <end position="79"/>
    </location>
    <ligand>
        <name>NAD(+)</name>
        <dbReference type="ChEBI" id="CHEBI:57540"/>
    </ligand>
</feature>
<feature type="binding site" evidence="1">
    <location>
        <position position="107"/>
    </location>
    <ligand>
        <name>NAD(+)</name>
        <dbReference type="ChEBI" id="CHEBI:57540"/>
    </ligand>
</feature>
<feature type="binding site" evidence="1">
    <location>
        <position position="130"/>
    </location>
    <ligand>
        <name>NAD(+)</name>
        <dbReference type="ChEBI" id="CHEBI:57540"/>
    </ligand>
</feature>
<feature type="binding site" evidence="1">
    <location>
        <position position="164"/>
    </location>
    <ligand>
        <name>NAD(+)</name>
        <dbReference type="ChEBI" id="CHEBI:57540"/>
    </ligand>
</feature>
<feature type="binding site" evidence="1">
    <location>
        <position position="278"/>
    </location>
    <ligand>
        <name>NAD(+)</name>
        <dbReference type="ChEBI" id="CHEBI:57540"/>
    </ligand>
</feature>
<feature type="binding site" evidence="1">
    <location>
        <position position="302"/>
    </location>
    <ligand>
        <name>NAD(+)</name>
        <dbReference type="ChEBI" id="CHEBI:57540"/>
    </ligand>
</feature>
<feature type="binding site" evidence="1">
    <location>
        <position position="395"/>
    </location>
    <ligand>
        <name>Zn(2+)</name>
        <dbReference type="ChEBI" id="CHEBI:29105"/>
    </ligand>
</feature>
<feature type="binding site" evidence="1">
    <location>
        <position position="398"/>
    </location>
    <ligand>
        <name>Zn(2+)</name>
        <dbReference type="ChEBI" id="CHEBI:29105"/>
    </ligand>
</feature>
<feature type="binding site" evidence="1">
    <location>
        <position position="413"/>
    </location>
    <ligand>
        <name>Zn(2+)</name>
        <dbReference type="ChEBI" id="CHEBI:29105"/>
    </ligand>
</feature>
<feature type="binding site" evidence="1">
    <location>
        <position position="418"/>
    </location>
    <ligand>
        <name>Zn(2+)</name>
        <dbReference type="ChEBI" id="CHEBI:29105"/>
    </ligand>
</feature>
<gene>
    <name evidence="1" type="primary">ligA</name>
    <name type="ordered locus">SEQ_0906</name>
</gene>
<evidence type="ECO:0000255" key="1">
    <source>
        <dbReference type="HAMAP-Rule" id="MF_01588"/>
    </source>
</evidence>
<accession>C0M6L2</accession>
<reference key="1">
    <citation type="journal article" date="2009" name="PLoS Pathog.">
        <title>Genomic evidence for the evolution of Streptococcus equi: host restriction, increased virulence, and genetic exchange with human pathogens.</title>
        <authorList>
            <person name="Holden M.T.G."/>
            <person name="Heather Z."/>
            <person name="Paillot R."/>
            <person name="Steward K.F."/>
            <person name="Webb K."/>
            <person name="Ainslie F."/>
            <person name="Jourdan T."/>
            <person name="Bason N.C."/>
            <person name="Holroyd N.E."/>
            <person name="Mungall K."/>
            <person name="Quail M.A."/>
            <person name="Sanders M."/>
            <person name="Simmonds M."/>
            <person name="Willey D."/>
            <person name="Brooks K."/>
            <person name="Aanensen D.M."/>
            <person name="Spratt B.G."/>
            <person name="Jolley K.A."/>
            <person name="Maiden M.C.J."/>
            <person name="Kehoe M."/>
            <person name="Chanter N."/>
            <person name="Bentley S.D."/>
            <person name="Robinson C."/>
            <person name="Maskell D.J."/>
            <person name="Parkhill J."/>
            <person name="Waller A.S."/>
        </authorList>
    </citation>
    <scope>NUCLEOTIDE SEQUENCE [LARGE SCALE GENOMIC DNA]</scope>
    <source>
        <strain>4047</strain>
    </source>
</reference>
<comment type="function">
    <text evidence="1">DNA ligase that catalyzes the formation of phosphodiester linkages between 5'-phosphoryl and 3'-hydroxyl groups in double-stranded DNA using NAD as a coenzyme and as the energy source for the reaction. It is essential for DNA replication and repair of damaged DNA.</text>
</comment>
<comment type="catalytic activity">
    <reaction evidence="1">
        <text>NAD(+) + (deoxyribonucleotide)n-3'-hydroxyl + 5'-phospho-(deoxyribonucleotide)m = (deoxyribonucleotide)n+m + AMP + beta-nicotinamide D-nucleotide.</text>
        <dbReference type="EC" id="6.5.1.2"/>
    </reaction>
</comment>
<comment type="cofactor">
    <cofactor evidence="1">
        <name>Mg(2+)</name>
        <dbReference type="ChEBI" id="CHEBI:18420"/>
    </cofactor>
    <cofactor evidence="1">
        <name>Mn(2+)</name>
        <dbReference type="ChEBI" id="CHEBI:29035"/>
    </cofactor>
</comment>
<comment type="similarity">
    <text evidence="1">Belongs to the NAD-dependent DNA ligase family. LigA subfamily.</text>
</comment>
<proteinExistence type="inferred from homology"/>
<name>DNLJ_STRE4</name>
<dbReference type="EC" id="6.5.1.2" evidence="1"/>
<dbReference type="EMBL" id="FM204883">
    <property type="protein sequence ID" value="CAW93413.1"/>
    <property type="molecule type" value="Genomic_DNA"/>
</dbReference>
<dbReference type="RefSeq" id="WP_012679384.1">
    <property type="nucleotide sequence ID" value="NC_012471.1"/>
</dbReference>
<dbReference type="SMR" id="C0M6L2"/>
<dbReference type="KEGG" id="seu:SEQ_0906"/>
<dbReference type="HOGENOM" id="CLU_007764_2_1_9"/>
<dbReference type="OrthoDB" id="9759736at2"/>
<dbReference type="Proteomes" id="UP000001365">
    <property type="component" value="Chromosome"/>
</dbReference>
<dbReference type="GO" id="GO:0005829">
    <property type="term" value="C:cytosol"/>
    <property type="evidence" value="ECO:0007669"/>
    <property type="project" value="TreeGrafter"/>
</dbReference>
<dbReference type="GO" id="GO:0003677">
    <property type="term" value="F:DNA binding"/>
    <property type="evidence" value="ECO:0007669"/>
    <property type="project" value="InterPro"/>
</dbReference>
<dbReference type="GO" id="GO:0003911">
    <property type="term" value="F:DNA ligase (NAD+) activity"/>
    <property type="evidence" value="ECO:0007669"/>
    <property type="project" value="UniProtKB-UniRule"/>
</dbReference>
<dbReference type="GO" id="GO:0046872">
    <property type="term" value="F:metal ion binding"/>
    <property type="evidence" value="ECO:0007669"/>
    <property type="project" value="UniProtKB-KW"/>
</dbReference>
<dbReference type="GO" id="GO:0006281">
    <property type="term" value="P:DNA repair"/>
    <property type="evidence" value="ECO:0007669"/>
    <property type="project" value="UniProtKB-KW"/>
</dbReference>
<dbReference type="GO" id="GO:0006260">
    <property type="term" value="P:DNA replication"/>
    <property type="evidence" value="ECO:0007669"/>
    <property type="project" value="UniProtKB-KW"/>
</dbReference>
<dbReference type="CDD" id="cd17748">
    <property type="entry name" value="BRCT_DNA_ligase_like"/>
    <property type="match status" value="1"/>
</dbReference>
<dbReference type="CDD" id="cd00114">
    <property type="entry name" value="LIGANc"/>
    <property type="match status" value="1"/>
</dbReference>
<dbReference type="FunFam" id="1.10.150.20:FF:000007">
    <property type="entry name" value="DNA ligase"/>
    <property type="match status" value="1"/>
</dbReference>
<dbReference type="FunFam" id="2.40.50.140:FF:000012">
    <property type="entry name" value="DNA ligase"/>
    <property type="match status" value="1"/>
</dbReference>
<dbReference type="FunFam" id="3.30.470.30:FF:000001">
    <property type="entry name" value="DNA ligase"/>
    <property type="match status" value="1"/>
</dbReference>
<dbReference type="Gene3D" id="6.20.10.30">
    <property type="match status" value="1"/>
</dbReference>
<dbReference type="Gene3D" id="1.10.150.20">
    <property type="entry name" value="5' to 3' exonuclease, C-terminal subdomain"/>
    <property type="match status" value="2"/>
</dbReference>
<dbReference type="Gene3D" id="3.40.50.10190">
    <property type="entry name" value="BRCT domain"/>
    <property type="match status" value="1"/>
</dbReference>
<dbReference type="Gene3D" id="3.30.470.30">
    <property type="entry name" value="DNA ligase/mRNA capping enzyme"/>
    <property type="match status" value="1"/>
</dbReference>
<dbReference type="Gene3D" id="1.10.287.610">
    <property type="entry name" value="Helix hairpin bin"/>
    <property type="match status" value="1"/>
</dbReference>
<dbReference type="Gene3D" id="2.40.50.140">
    <property type="entry name" value="Nucleic acid-binding proteins"/>
    <property type="match status" value="1"/>
</dbReference>
<dbReference type="HAMAP" id="MF_01588">
    <property type="entry name" value="DNA_ligase_A"/>
    <property type="match status" value="1"/>
</dbReference>
<dbReference type="InterPro" id="IPR001357">
    <property type="entry name" value="BRCT_dom"/>
</dbReference>
<dbReference type="InterPro" id="IPR036420">
    <property type="entry name" value="BRCT_dom_sf"/>
</dbReference>
<dbReference type="InterPro" id="IPR041663">
    <property type="entry name" value="DisA/LigA_HHH"/>
</dbReference>
<dbReference type="InterPro" id="IPR001679">
    <property type="entry name" value="DNA_ligase"/>
</dbReference>
<dbReference type="InterPro" id="IPR018239">
    <property type="entry name" value="DNA_ligase_AS"/>
</dbReference>
<dbReference type="InterPro" id="IPR033136">
    <property type="entry name" value="DNA_ligase_CS"/>
</dbReference>
<dbReference type="InterPro" id="IPR013839">
    <property type="entry name" value="DNAligase_adenylation"/>
</dbReference>
<dbReference type="InterPro" id="IPR013840">
    <property type="entry name" value="DNAligase_N"/>
</dbReference>
<dbReference type="InterPro" id="IPR003583">
    <property type="entry name" value="Hlx-hairpin-Hlx_DNA-bd_motif"/>
</dbReference>
<dbReference type="InterPro" id="IPR012340">
    <property type="entry name" value="NA-bd_OB-fold"/>
</dbReference>
<dbReference type="InterPro" id="IPR004150">
    <property type="entry name" value="NAD_DNA_ligase_OB"/>
</dbReference>
<dbReference type="InterPro" id="IPR010994">
    <property type="entry name" value="RuvA_2-like"/>
</dbReference>
<dbReference type="InterPro" id="IPR004149">
    <property type="entry name" value="Znf_DNAligase_C4"/>
</dbReference>
<dbReference type="NCBIfam" id="TIGR00575">
    <property type="entry name" value="dnlj"/>
    <property type="match status" value="1"/>
</dbReference>
<dbReference type="NCBIfam" id="NF005932">
    <property type="entry name" value="PRK07956.1"/>
    <property type="match status" value="1"/>
</dbReference>
<dbReference type="PANTHER" id="PTHR23389">
    <property type="entry name" value="CHROMOSOME TRANSMISSION FIDELITY FACTOR 18"/>
    <property type="match status" value="1"/>
</dbReference>
<dbReference type="PANTHER" id="PTHR23389:SF9">
    <property type="entry name" value="DNA LIGASE"/>
    <property type="match status" value="1"/>
</dbReference>
<dbReference type="Pfam" id="PF00533">
    <property type="entry name" value="BRCT"/>
    <property type="match status" value="1"/>
</dbReference>
<dbReference type="Pfam" id="PF01653">
    <property type="entry name" value="DNA_ligase_aden"/>
    <property type="match status" value="1"/>
</dbReference>
<dbReference type="Pfam" id="PF03120">
    <property type="entry name" value="DNA_ligase_OB"/>
    <property type="match status" value="1"/>
</dbReference>
<dbReference type="Pfam" id="PF03119">
    <property type="entry name" value="DNA_ligase_ZBD"/>
    <property type="match status" value="1"/>
</dbReference>
<dbReference type="Pfam" id="PF12826">
    <property type="entry name" value="HHH_2"/>
    <property type="match status" value="1"/>
</dbReference>
<dbReference type="Pfam" id="PF14520">
    <property type="entry name" value="HHH_5"/>
    <property type="match status" value="1"/>
</dbReference>
<dbReference type="PIRSF" id="PIRSF001604">
    <property type="entry name" value="LigA"/>
    <property type="match status" value="1"/>
</dbReference>
<dbReference type="SMART" id="SM00292">
    <property type="entry name" value="BRCT"/>
    <property type="match status" value="1"/>
</dbReference>
<dbReference type="SMART" id="SM00278">
    <property type="entry name" value="HhH1"/>
    <property type="match status" value="3"/>
</dbReference>
<dbReference type="SMART" id="SM00532">
    <property type="entry name" value="LIGANc"/>
    <property type="match status" value="1"/>
</dbReference>
<dbReference type="SUPFAM" id="SSF52113">
    <property type="entry name" value="BRCT domain"/>
    <property type="match status" value="1"/>
</dbReference>
<dbReference type="SUPFAM" id="SSF56091">
    <property type="entry name" value="DNA ligase/mRNA capping enzyme, catalytic domain"/>
    <property type="match status" value="1"/>
</dbReference>
<dbReference type="SUPFAM" id="SSF50249">
    <property type="entry name" value="Nucleic acid-binding proteins"/>
    <property type="match status" value="1"/>
</dbReference>
<dbReference type="SUPFAM" id="SSF47781">
    <property type="entry name" value="RuvA domain 2-like"/>
    <property type="match status" value="1"/>
</dbReference>
<dbReference type="PROSITE" id="PS50172">
    <property type="entry name" value="BRCT"/>
    <property type="match status" value="1"/>
</dbReference>
<dbReference type="PROSITE" id="PS01055">
    <property type="entry name" value="DNA_LIGASE_N1"/>
    <property type="match status" value="1"/>
</dbReference>
<dbReference type="PROSITE" id="PS01056">
    <property type="entry name" value="DNA_LIGASE_N2"/>
    <property type="match status" value="1"/>
</dbReference>